<feature type="chain" id="PRO_1000052267" description="Large ribosomal subunit protein uL24">
    <location>
        <begin position="1"/>
        <end position="104"/>
    </location>
</feature>
<sequence length="104" mass="11218">MAAKIRKGDKVIVLSGRDKGRTGEVFEVRPAESRALVRGVNMVKRHQKQSQSQEGGIISKESPVHLSKIAIVGKDGKPTRVGFKIQADGTKVRVAKRSGAEIDG</sequence>
<reference key="1">
    <citation type="submission" date="2006-03" db="EMBL/GenBank/DDBJ databases">
        <title>Complete sequence of chromosome of Nitrobacter hamburgensis X14.</title>
        <authorList>
            <consortium name="US DOE Joint Genome Institute"/>
            <person name="Copeland A."/>
            <person name="Lucas S."/>
            <person name="Lapidus A."/>
            <person name="Barry K."/>
            <person name="Detter J.C."/>
            <person name="Glavina del Rio T."/>
            <person name="Hammon N."/>
            <person name="Israni S."/>
            <person name="Dalin E."/>
            <person name="Tice H."/>
            <person name="Pitluck S."/>
            <person name="Chain P."/>
            <person name="Malfatti S."/>
            <person name="Shin M."/>
            <person name="Vergez L."/>
            <person name="Schmutz J."/>
            <person name="Larimer F."/>
            <person name="Land M."/>
            <person name="Hauser L."/>
            <person name="Kyrpides N."/>
            <person name="Ivanova N."/>
            <person name="Ward B."/>
            <person name="Arp D."/>
            <person name="Klotz M."/>
            <person name="Stein L."/>
            <person name="O'Mullan G."/>
            <person name="Starkenburg S."/>
            <person name="Sayavedra L."/>
            <person name="Poret-Peterson A.T."/>
            <person name="Gentry M.E."/>
            <person name="Bruce D."/>
            <person name="Richardson P."/>
        </authorList>
    </citation>
    <scope>NUCLEOTIDE SEQUENCE [LARGE SCALE GENOMIC DNA]</scope>
    <source>
        <strain>DSM 10229 / NCIMB 13809 / X14</strain>
    </source>
</reference>
<gene>
    <name evidence="1" type="primary">rplX</name>
    <name type="ordered locus">Nham_1556</name>
</gene>
<organism>
    <name type="scientific">Nitrobacter hamburgensis (strain DSM 10229 / NCIMB 13809 / X14)</name>
    <dbReference type="NCBI Taxonomy" id="323097"/>
    <lineage>
        <taxon>Bacteria</taxon>
        <taxon>Pseudomonadati</taxon>
        <taxon>Pseudomonadota</taxon>
        <taxon>Alphaproteobacteria</taxon>
        <taxon>Hyphomicrobiales</taxon>
        <taxon>Nitrobacteraceae</taxon>
        <taxon>Nitrobacter</taxon>
    </lineage>
</organism>
<dbReference type="EMBL" id="CP000319">
    <property type="protein sequence ID" value="ABE62378.1"/>
    <property type="molecule type" value="Genomic_DNA"/>
</dbReference>
<dbReference type="RefSeq" id="WP_011510064.1">
    <property type="nucleotide sequence ID" value="NC_007964.1"/>
</dbReference>
<dbReference type="SMR" id="Q1QN19"/>
<dbReference type="STRING" id="323097.Nham_1556"/>
<dbReference type="KEGG" id="nha:Nham_1556"/>
<dbReference type="eggNOG" id="COG0198">
    <property type="taxonomic scope" value="Bacteria"/>
</dbReference>
<dbReference type="HOGENOM" id="CLU_093315_2_2_5"/>
<dbReference type="OrthoDB" id="9807419at2"/>
<dbReference type="Proteomes" id="UP000001953">
    <property type="component" value="Chromosome"/>
</dbReference>
<dbReference type="GO" id="GO:1990904">
    <property type="term" value="C:ribonucleoprotein complex"/>
    <property type="evidence" value="ECO:0007669"/>
    <property type="project" value="UniProtKB-KW"/>
</dbReference>
<dbReference type="GO" id="GO:0005840">
    <property type="term" value="C:ribosome"/>
    <property type="evidence" value="ECO:0007669"/>
    <property type="project" value="UniProtKB-KW"/>
</dbReference>
<dbReference type="GO" id="GO:0019843">
    <property type="term" value="F:rRNA binding"/>
    <property type="evidence" value="ECO:0007669"/>
    <property type="project" value="UniProtKB-UniRule"/>
</dbReference>
<dbReference type="GO" id="GO:0003735">
    <property type="term" value="F:structural constituent of ribosome"/>
    <property type="evidence" value="ECO:0007669"/>
    <property type="project" value="InterPro"/>
</dbReference>
<dbReference type="GO" id="GO:0006412">
    <property type="term" value="P:translation"/>
    <property type="evidence" value="ECO:0007669"/>
    <property type="project" value="UniProtKB-UniRule"/>
</dbReference>
<dbReference type="CDD" id="cd06089">
    <property type="entry name" value="KOW_RPL26"/>
    <property type="match status" value="1"/>
</dbReference>
<dbReference type="Gene3D" id="2.30.30.30">
    <property type="match status" value="1"/>
</dbReference>
<dbReference type="HAMAP" id="MF_01326_B">
    <property type="entry name" value="Ribosomal_uL24_B"/>
    <property type="match status" value="1"/>
</dbReference>
<dbReference type="InterPro" id="IPR005824">
    <property type="entry name" value="KOW"/>
</dbReference>
<dbReference type="InterPro" id="IPR014722">
    <property type="entry name" value="Rib_uL2_dom2"/>
</dbReference>
<dbReference type="InterPro" id="IPR003256">
    <property type="entry name" value="Ribosomal_uL24"/>
</dbReference>
<dbReference type="InterPro" id="IPR005825">
    <property type="entry name" value="Ribosomal_uL24_CS"/>
</dbReference>
<dbReference type="InterPro" id="IPR041988">
    <property type="entry name" value="Ribosomal_uL24_KOW"/>
</dbReference>
<dbReference type="InterPro" id="IPR008991">
    <property type="entry name" value="Translation_prot_SH3-like_sf"/>
</dbReference>
<dbReference type="NCBIfam" id="TIGR01079">
    <property type="entry name" value="rplX_bact"/>
    <property type="match status" value="1"/>
</dbReference>
<dbReference type="PANTHER" id="PTHR12903">
    <property type="entry name" value="MITOCHONDRIAL RIBOSOMAL PROTEIN L24"/>
    <property type="match status" value="1"/>
</dbReference>
<dbReference type="Pfam" id="PF00467">
    <property type="entry name" value="KOW"/>
    <property type="match status" value="1"/>
</dbReference>
<dbReference type="Pfam" id="PF17136">
    <property type="entry name" value="ribosomal_L24"/>
    <property type="match status" value="1"/>
</dbReference>
<dbReference type="SMART" id="SM00739">
    <property type="entry name" value="KOW"/>
    <property type="match status" value="1"/>
</dbReference>
<dbReference type="SUPFAM" id="SSF50104">
    <property type="entry name" value="Translation proteins SH3-like domain"/>
    <property type="match status" value="1"/>
</dbReference>
<dbReference type="PROSITE" id="PS01108">
    <property type="entry name" value="RIBOSOMAL_L24"/>
    <property type="match status" value="1"/>
</dbReference>
<name>RL24_NITHX</name>
<proteinExistence type="inferred from homology"/>
<comment type="function">
    <text evidence="1">One of two assembly initiator proteins, it binds directly to the 5'-end of the 23S rRNA, where it nucleates assembly of the 50S subunit.</text>
</comment>
<comment type="function">
    <text evidence="1">One of the proteins that surrounds the polypeptide exit tunnel on the outside of the subunit.</text>
</comment>
<comment type="subunit">
    <text evidence="1">Part of the 50S ribosomal subunit.</text>
</comment>
<comment type="similarity">
    <text evidence="1">Belongs to the universal ribosomal protein uL24 family.</text>
</comment>
<evidence type="ECO:0000255" key="1">
    <source>
        <dbReference type="HAMAP-Rule" id="MF_01326"/>
    </source>
</evidence>
<evidence type="ECO:0000305" key="2"/>
<keyword id="KW-1185">Reference proteome</keyword>
<keyword id="KW-0687">Ribonucleoprotein</keyword>
<keyword id="KW-0689">Ribosomal protein</keyword>
<keyword id="KW-0694">RNA-binding</keyword>
<keyword id="KW-0699">rRNA-binding</keyword>
<protein>
    <recommendedName>
        <fullName evidence="1">Large ribosomal subunit protein uL24</fullName>
    </recommendedName>
    <alternativeName>
        <fullName evidence="2">50S ribosomal protein L24</fullName>
    </alternativeName>
</protein>
<accession>Q1QN19</accession>